<keyword id="KW-0067">ATP-binding</keyword>
<keyword id="KW-0997">Cell inner membrane</keyword>
<keyword id="KW-1003">Cell membrane</keyword>
<keyword id="KW-0472">Membrane</keyword>
<keyword id="KW-0547">Nucleotide-binding</keyword>
<keyword id="KW-1185">Reference proteome</keyword>
<keyword id="KW-1278">Translocase</keyword>
<keyword id="KW-0813">Transport</keyword>
<name>THIQ_ECOL6</name>
<organism>
    <name type="scientific">Escherichia coli O6:H1 (strain CFT073 / ATCC 700928 / UPEC)</name>
    <dbReference type="NCBI Taxonomy" id="199310"/>
    <lineage>
        <taxon>Bacteria</taxon>
        <taxon>Pseudomonadati</taxon>
        <taxon>Pseudomonadota</taxon>
        <taxon>Gammaproteobacteria</taxon>
        <taxon>Enterobacterales</taxon>
        <taxon>Enterobacteriaceae</taxon>
        <taxon>Escherichia</taxon>
    </lineage>
</organism>
<dbReference type="EC" id="7.6.2.15" evidence="1"/>
<dbReference type="EMBL" id="AE014075">
    <property type="protein sequence ID" value="AAN78578.1"/>
    <property type="status" value="ALT_INIT"/>
    <property type="molecule type" value="Genomic_DNA"/>
</dbReference>
<dbReference type="RefSeq" id="WP_000916321.1">
    <property type="nucleotide sequence ID" value="NZ_CP051263.1"/>
</dbReference>
<dbReference type="SMR" id="Q8FL82"/>
<dbReference type="STRING" id="199310.c0082"/>
<dbReference type="KEGG" id="ecc:c0082"/>
<dbReference type="eggNOG" id="COG3840">
    <property type="taxonomic scope" value="Bacteria"/>
</dbReference>
<dbReference type="HOGENOM" id="CLU_000604_1_22_6"/>
<dbReference type="Proteomes" id="UP000001410">
    <property type="component" value="Chromosome"/>
</dbReference>
<dbReference type="GO" id="GO:0005886">
    <property type="term" value="C:plasma membrane"/>
    <property type="evidence" value="ECO:0007669"/>
    <property type="project" value="UniProtKB-SubCell"/>
</dbReference>
<dbReference type="GO" id="GO:0048502">
    <property type="term" value="F:ABC-type thiamine transporter activity"/>
    <property type="evidence" value="ECO:0007669"/>
    <property type="project" value="UniProtKB-EC"/>
</dbReference>
<dbReference type="GO" id="GO:0005524">
    <property type="term" value="F:ATP binding"/>
    <property type="evidence" value="ECO:0007669"/>
    <property type="project" value="UniProtKB-KW"/>
</dbReference>
<dbReference type="GO" id="GO:0016887">
    <property type="term" value="F:ATP hydrolysis activity"/>
    <property type="evidence" value="ECO:0007669"/>
    <property type="project" value="InterPro"/>
</dbReference>
<dbReference type="CDD" id="cd03298">
    <property type="entry name" value="ABC_ThiQ_thiamine_transporter"/>
    <property type="match status" value="1"/>
</dbReference>
<dbReference type="FunFam" id="3.40.50.300:FF:001071">
    <property type="entry name" value="Thiamine import ATP-binding protein ThiQ"/>
    <property type="match status" value="1"/>
</dbReference>
<dbReference type="Gene3D" id="3.40.50.300">
    <property type="entry name" value="P-loop containing nucleotide triphosphate hydrolases"/>
    <property type="match status" value="1"/>
</dbReference>
<dbReference type="InterPro" id="IPR003593">
    <property type="entry name" value="AAA+_ATPase"/>
</dbReference>
<dbReference type="InterPro" id="IPR050093">
    <property type="entry name" value="ABC_SmlMolc_Importer"/>
</dbReference>
<dbReference type="InterPro" id="IPR003439">
    <property type="entry name" value="ABC_transporter-like_ATP-bd"/>
</dbReference>
<dbReference type="InterPro" id="IPR017871">
    <property type="entry name" value="ABC_transporter-like_CS"/>
</dbReference>
<dbReference type="InterPro" id="IPR027417">
    <property type="entry name" value="P-loop_NTPase"/>
</dbReference>
<dbReference type="InterPro" id="IPR005968">
    <property type="entry name" value="Thiamine_ABC_ThiQ"/>
</dbReference>
<dbReference type="NCBIfam" id="NF008039">
    <property type="entry name" value="PRK10771.1"/>
    <property type="match status" value="1"/>
</dbReference>
<dbReference type="NCBIfam" id="TIGR01277">
    <property type="entry name" value="thiQ"/>
    <property type="match status" value="1"/>
</dbReference>
<dbReference type="PANTHER" id="PTHR42781">
    <property type="entry name" value="SPERMIDINE/PUTRESCINE IMPORT ATP-BINDING PROTEIN POTA"/>
    <property type="match status" value="1"/>
</dbReference>
<dbReference type="PANTHER" id="PTHR42781:SF1">
    <property type="entry name" value="THIAMINE IMPORT ATP-BINDING PROTEIN THIQ"/>
    <property type="match status" value="1"/>
</dbReference>
<dbReference type="Pfam" id="PF00005">
    <property type="entry name" value="ABC_tran"/>
    <property type="match status" value="1"/>
</dbReference>
<dbReference type="SMART" id="SM00382">
    <property type="entry name" value="AAA"/>
    <property type="match status" value="1"/>
</dbReference>
<dbReference type="SUPFAM" id="SSF52540">
    <property type="entry name" value="P-loop containing nucleoside triphosphate hydrolases"/>
    <property type="match status" value="1"/>
</dbReference>
<dbReference type="PROSITE" id="PS00211">
    <property type="entry name" value="ABC_TRANSPORTER_1"/>
    <property type="match status" value="1"/>
</dbReference>
<dbReference type="PROSITE" id="PS50893">
    <property type="entry name" value="ABC_TRANSPORTER_2"/>
    <property type="match status" value="1"/>
</dbReference>
<dbReference type="PROSITE" id="PS51288">
    <property type="entry name" value="THIQ"/>
    <property type="match status" value="1"/>
</dbReference>
<feature type="chain" id="PRO_0000274440" description="Thiamine import ATP-binding protein ThiQ">
    <location>
        <begin position="1"/>
        <end position="232"/>
    </location>
</feature>
<feature type="domain" description="ABC transporter" evidence="1">
    <location>
        <begin position="2"/>
        <end position="230"/>
    </location>
</feature>
<feature type="binding site" evidence="1">
    <location>
        <begin position="32"/>
        <end position="39"/>
    </location>
    <ligand>
        <name>ATP</name>
        <dbReference type="ChEBI" id="CHEBI:30616"/>
    </ligand>
</feature>
<gene>
    <name evidence="1" type="primary">thiQ</name>
    <name type="ordered locus">c0082</name>
</gene>
<reference key="1">
    <citation type="journal article" date="2002" name="Proc. Natl. Acad. Sci. U.S.A.">
        <title>Extensive mosaic structure revealed by the complete genome sequence of uropathogenic Escherichia coli.</title>
        <authorList>
            <person name="Welch R.A."/>
            <person name="Burland V."/>
            <person name="Plunkett G. III"/>
            <person name="Redford P."/>
            <person name="Roesch P."/>
            <person name="Rasko D."/>
            <person name="Buckles E.L."/>
            <person name="Liou S.-R."/>
            <person name="Boutin A."/>
            <person name="Hackett J."/>
            <person name="Stroud D."/>
            <person name="Mayhew G.F."/>
            <person name="Rose D.J."/>
            <person name="Zhou S."/>
            <person name="Schwartz D.C."/>
            <person name="Perna N.T."/>
            <person name="Mobley H.L.T."/>
            <person name="Donnenberg M.S."/>
            <person name="Blattner F.R."/>
        </authorList>
    </citation>
    <scope>NUCLEOTIDE SEQUENCE [LARGE SCALE GENOMIC DNA]</scope>
    <source>
        <strain>CFT073 / ATCC 700928 / UPEC</strain>
    </source>
</reference>
<sequence>MLKLTDITWLYQHLPMRFSLTVERGEQVAILGPSGAGKSTLLNLIAGFLTPASGLLTIDDVDHTTTPPSRRPVSMLFQENNLFSHLTVAQNIGLGLNPGLKLNAAQQKKMHAIAHQMGIDNLMARLPGELSGGQRQRVALARCLVREQPILLLDEPFSALDPALRQEMLTLVSTSCQQQKMTLLMVSHSVEDAARIATRSVVVADGRIAWQGKTDELLSGKASASALLGIKG</sequence>
<accession>Q8FL82</accession>
<protein>
    <recommendedName>
        <fullName evidence="1">Thiamine import ATP-binding protein ThiQ</fullName>
        <ecNumber evidence="1">7.6.2.15</ecNumber>
    </recommendedName>
</protein>
<comment type="function">
    <text evidence="1">Part of the ABC transporter complex ThiBPQ involved in thiamine import. Responsible for energy coupling to the transport system.</text>
</comment>
<comment type="catalytic activity">
    <reaction evidence="1">
        <text>thiamine(out) + ATP + H2O = thiamine(in) + ADP + phosphate + H(+)</text>
        <dbReference type="Rhea" id="RHEA:29811"/>
        <dbReference type="ChEBI" id="CHEBI:15377"/>
        <dbReference type="ChEBI" id="CHEBI:15378"/>
        <dbReference type="ChEBI" id="CHEBI:18385"/>
        <dbReference type="ChEBI" id="CHEBI:30616"/>
        <dbReference type="ChEBI" id="CHEBI:43474"/>
        <dbReference type="ChEBI" id="CHEBI:456216"/>
        <dbReference type="EC" id="7.6.2.15"/>
    </reaction>
</comment>
<comment type="subunit">
    <text evidence="1">The complex is composed of two ATP-binding proteins (ThiQ), two transmembrane proteins (ThiP) and a solute-binding protein (ThiB).</text>
</comment>
<comment type="subcellular location">
    <subcellularLocation>
        <location evidence="1">Cell inner membrane</location>
        <topology evidence="1">Peripheral membrane protein</topology>
    </subcellularLocation>
</comment>
<comment type="similarity">
    <text evidence="1">Belongs to the ABC transporter superfamily. Thiamine importer (TC 3.A.1.19.1) family.</text>
</comment>
<comment type="sequence caution" evidence="2">
    <conflict type="erroneous initiation">
        <sequence resource="EMBL-CDS" id="AAN78578"/>
    </conflict>
</comment>
<proteinExistence type="inferred from homology"/>
<evidence type="ECO:0000255" key="1">
    <source>
        <dbReference type="HAMAP-Rule" id="MF_01723"/>
    </source>
</evidence>
<evidence type="ECO:0000305" key="2"/>